<sequence>MNAMLETPELPAVFDGVKLAAVAAVLYVIVRCLNLKSPTAPPDLYFQDSGLSRFLLKSCPLLTKEYIPPLIWGKSGHIQTALYGKMGRVRSPHPYGHRKFITMSDGATSTFDLFEPLAEHCVGDDITMVICPGIANHSEKQYIRTFVDYAQKNGYRCAVLNHLGALPNIELTSPRMFTYGCTWEFGAMVNYIKKTYPLTQLVVVGFSLGGNIVCKYLGETQANQEKVLCCVSVCQGYSALRAQETFMQWDQCRRFYNFLMADNMKKIILSHRQALFGDHVKKPQSLEDTDLSRLYTATSLMQIDDNVMRKFHGYNSLKEYYEEESCMRYLHRIYVPLMLVNAADDPLVHESLLTIPKSLSEKRENVMFVLPLHGGHLGFFEGSVLFPEPLTWMDKLVVEYANAICQWERNKLQCSDTEQVEADLE</sequence>
<gene>
    <name evidence="13" type="primary">ABHD2</name>
    <name evidence="2" type="synonym">LABH2</name>
</gene>
<name>ABHD2_HUMAN</name>
<dbReference type="EC" id="3.1.1.23" evidence="6"/>
<dbReference type="EC" id="3.1.1.6" evidence="7"/>
<dbReference type="EC" id="3.1.1.79" evidence="7"/>
<dbReference type="EMBL" id="X12433">
    <property type="protein sequence ID" value="CAA30976.1"/>
    <property type="molecule type" value="mRNA"/>
</dbReference>
<dbReference type="EMBL" id="AF546700">
    <property type="protein sequence ID" value="AAQ12021.1"/>
    <property type="molecule type" value="mRNA"/>
</dbReference>
<dbReference type="EMBL" id="AK222841">
    <property type="protein sequence ID" value="BAD96561.1"/>
    <property type="molecule type" value="mRNA"/>
</dbReference>
<dbReference type="EMBL" id="AK223083">
    <property type="protein sequence ID" value="BAD96803.1"/>
    <property type="molecule type" value="mRNA"/>
</dbReference>
<dbReference type="EMBL" id="BC019248">
    <property type="protein sequence ID" value="AAH19248.1"/>
    <property type="molecule type" value="mRNA"/>
</dbReference>
<dbReference type="EMBL" id="BC090052">
    <property type="protein sequence ID" value="AAH90052.1"/>
    <property type="molecule type" value="mRNA"/>
</dbReference>
<dbReference type="CCDS" id="CCDS10348.1"/>
<dbReference type="PIR" id="A31026">
    <property type="entry name" value="A31026"/>
</dbReference>
<dbReference type="RefSeq" id="NP_001403341.1">
    <property type="nucleotide sequence ID" value="NM_001416412.1"/>
</dbReference>
<dbReference type="RefSeq" id="NP_001403342.1">
    <property type="nucleotide sequence ID" value="NM_001416413.1"/>
</dbReference>
<dbReference type="RefSeq" id="NP_001403343.1">
    <property type="nucleotide sequence ID" value="NM_001416414.1"/>
</dbReference>
<dbReference type="RefSeq" id="NP_001403344.1">
    <property type="nucleotide sequence ID" value="NM_001416415.1"/>
</dbReference>
<dbReference type="RefSeq" id="NP_001403345.1">
    <property type="nucleotide sequence ID" value="NM_001416416.1"/>
</dbReference>
<dbReference type="RefSeq" id="NP_001403346.1">
    <property type="nucleotide sequence ID" value="NM_001416417.1"/>
</dbReference>
<dbReference type="RefSeq" id="NP_001403347.1">
    <property type="nucleotide sequence ID" value="NM_001416418.1"/>
</dbReference>
<dbReference type="RefSeq" id="NP_001403348.1">
    <property type="nucleotide sequence ID" value="NM_001416419.1"/>
</dbReference>
<dbReference type="RefSeq" id="NP_001403351.1">
    <property type="nucleotide sequence ID" value="NM_001416422.1"/>
</dbReference>
<dbReference type="RefSeq" id="NP_001403352.1">
    <property type="nucleotide sequence ID" value="NM_001416423.1"/>
</dbReference>
<dbReference type="RefSeq" id="NP_001403353.1">
    <property type="nucleotide sequence ID" value="NM_001416424.1"/>
</dbReference>
<dbReference type="RefSeq" id="NP_008942.3">
    <property type="nucleotide sequence ID" value="NM_007011.7"/>
</dbReference>
<dbReference type="RefSeq" id="NP_690888.1">
    <property type="nucleotide sequence ID" value="NM_152924.5"/>
</dbReference>
<dbReference type="RefSeq" id="XP_005254889.1">
    <property type="nucleotide sequence ID" value="XM_005254832.1"/>
</dbReference>
<dbReference type="RefSeq" id="XP_005254890.1">
    <property type="nucleotide sequence ID" value="XM_005254833.1"/>
</dbReference>
<dbReference type="RefSeq" id="XP_011519467.1">
    <property type="nucleotide sequence ID" value="XM_011521165.1"/>
</dbReference>
<dbReference type="BioGRID" id="116242">
    <property type="interactions" value="10"/>
</dbReference>
<dbReference type="FunCoup" id="P08910">
    <property type="interactions" value="55"/>
</dbReference>
<dbReference type="IntAct" id="P08910">
    <property type="interactions" value="1"/>
</dbReference>
<dbReference type="STRING" id="9606.ENSP00000268129"/>
<dbReference type="SwissLipids" id="SLP:000001546"/>
<dbReference type="ESTHER" id="human-ABHD2">
    <property type="family name" value="abh_upf0017"/>
</dbReference>
<dbReference type="GlyCosmos" id="P08910">
    <property type="glycosylation" value="1 site, No reported glycans"/>
</dbReference>
<dbReference type="GlyGen" id="P08910">
    <property type="glycosylation" value="1 site"/>
</dbReference>
<dbReference type="iPTMnet" id="P08910"/>
<dbReference type="PhosphoSitePlus" id="P08910"/>
<dbReference type="SwissPalm" id="P08910"/>
<dbReference type="BioMuta" id="ABHD2"/>
<dbReference type="DMDM" id="123504"/>
<dbReference type="jPOST" id="P08910"/>
<dbReference type="MassIVE" id="P08910"/>
<dbReference type="PaxDb" id="9606-ENSP00000268129"/>
<dbReference type="PeptideAtlas" id="P08910"/>
<dbReference type="ProteomicsDB" id="52174"/>
<dbReference type="Pumba" id="P08910"/>
<dbReference type="Antibodypedia" id="1104">
    <property type="antibodies" value="165 antibodies from 26 providers"/>
</dbReference>
<dbReference type="DNASU" id="11057"/>
<dbReference type="Ensembl" id="ENST00000352732.10">
    <property type="protein sequence ID" value="ENSP00000268129.5"/>
    <property type="gene ID" value="ENSG00000140526.18"/>
</dbReference>
<dbReference type="Ensembl" id="ENST00000565973.5">
    <property type="protein sequence ID" value="ENSP00000455639.1"/>
    <property type="gene ID" value="ENSG00000140526.18"/>
</dbReference>
<dbReference type="GeneID" id="11057"/>
<dbReference type="KEGG" id="hsa:11057"/>
<dbReference type="MANE-Select" id="ENST00000352732.10">
    <property type="protein sequence ID" value="ENSP00000268129.5"/>
    <property type="RefSeq nucleotide sequence ID" value="NM_152924.5"/>
    <property type="RefSeq protein sequence ID" value="NP_690888.1"/>
</dbReference>
<dbReference type="UCSC" id="uc002bnk.2">
    <property type="organism name" value="human"/>
</dbReference>
<dbReference type="AGR" id="HGNC:18717"/>
<dbReference type="CTD" id="11057"/>
<dbReference type="DisGeNET" id="11057"/>
<dbReference type="GeneCards" id="ABHD2"/>
<dbReference type="HGNC" id="HGNC:18717">
    <property type="gene designation" value="ABHD2"/>
</dbReference>
<dbReference type="HPA" id="ENSG00000140526">
    <property type="expression patterns" value="Tissue enhanced (liver)"/>
</dbReference>
<dbReference type="MIM" id="612196">
    <property type="type" value="gene"/>
</dbReference>
<dbReference type="neXtProt" id="NX_P08910"/>
<dbReference type="OpenTargets" id="ENSG00000140526"/>
<dbReference type="PharmGKB" id="PA38658"/>
<dbReference type="VEuPathDB" id="HostDB:ENSG00000140526"/>
<dbReference type="eggNOG" id="KOG1838">
    <property type="taxonomic scope" value="Eukaryota"/>
</dbReference>
<dbReference type="GeneTree" id="ENSGT00950000182902"/>
<dbReference type="HOGENOM" id="CLU_032487_5_0_1"/>
<dbReference type="InParanoid" id="P08910"/>
<dbReference type="OMA" id="HCTGEDV"/>
<dbReference type="OrthoDB" id="5954035at2759"/>
<dbReference type="PAN-GO" id="P08910">
    <property type="GO annotations" value="9 GO annotations based on evolutionary models"/>
</dbReference>
<dbReference type="PhylomeDB" id="P08910"/>
<dbReference type="TreeFam" id="TF313195"/>
<dbReference type="PathwayCommons" id="P08910"/>
<dbReference type="SignaLink" id="P08910"/>
<dbReference type="BioGRID-ORCS" id="11057">
    <property type="hits" value="9 hits in 1154 CRISPR screens"/>
</dbReference>
<dbReference type="ChiTaRS" id="ABHD2">
    <property type="organism name" value="human"/>
</dbReference>
<dbReference type="GeneWiki" id="ABHD2"/>
<dbReference type="GenomeRNAi" id="11057"/>
<dbReference type="Pharos" id="P08910">
    <property type="development level" value="Tbio"/>
</dbReference>
<dbReference type="PRO" id="PR:P08910"/>
<dbReference type="Proteomes" id="UP000005640">
    <property type="component" value="Chromosome 15"/>
</dbReference>
<dbReference type="RNAct" id="P08910">
    <property type="molecule type" value="protein"/>
</dbReference>
<dbReference type="Bgee" id="ENSG00000140526">
    <property type="expression patterns" value="Expressed in corpus epididymis and 199 other cell types or tissues"/>
</dbReference>
<dbReference type="ExpressionAtlas" id="P08910">
    <property type="expression patterns" value="baseline and differential"/>
</dbReference>
<dbReference type="GO" id="GO:0001669">
    <property type="term" value="C:acrosomal vesicle"/>
    <property type="evidence" value="ECO:0007669"/>
    <property type="project" value="Ensembl"/>
</dbReference>
<dbReference type="GO" id="GO:0036126">
    <property type="term" value="C:sperm flagellum"/>
    <property type="evidence" value="ECO:0000314"/>
    <property type="project" value="UniProtKB"/>
</dbReference>
<dbReference type="GO" id="GO:0097524">
    <property type="term" value="C:sperm plasma membrane"/>
    <property type="evidence" value="ECO:0000314"/>
    <property type="project" value="UniProtKB"/>
</dbReference>
<dbReference type="GO" id="GO:0008126">
    <property type="term" value="F:acetylesterase activity"/>
    <property type="evidence" value="ECO:0000314"/>
    <property type="project" value="UniProtKB"/>
</dbReference>
<dbReference type="GO" id="GO:0120516">
    <property type="term" value="F:diacylglycerol lipase activity"/>
    <property type="evidence" value="ECO:0000314"/>
    <property type="project" value="UniProtKB"/>
</dbReference>
<dbReference type="GO" id="GO:0042562">
    <property type="term" value="F:hormone binding"/>
    <property type="evidence" value="ECO:0000314"/>
    <property type="project" value="UniProtKB"/>
</dbReference>
<dbReference type="GO" id="GO:0047372">
    <property type="term" value="F:monoacylglycerol lipase activity"/>
    <property type="evidence" value="ECO:0000314"/>
    <property type="project" value="UniProtKB"/>
</dbReference>
<dbReference type="GO" id="GO:0003707">
    <property type="term" value="F:nuclear steroid receptor activity"/>
    <property type="evidence" value="ECO:0000314"/>
    <property type="project" value="UniProtKB"/>
</dbReference>
<dbReference type="GO" id="GO:0004806">
    <property type="term" value="F:triacylglycerol lipase activity"/>
    <property type="evidence" value="ECO:0007669"/>
    <property type="project" value="RHEA"/>
</dbReference>
<dbReference type="GO" id="GO:0007340">
    <property type="term" value="P:acrosome reaction"/>
    <property type="evidence" value="ECO:0007669"/>
    <property type="project" value="Ensembl"/>
</dbReference>
<dbReference type="GO" id="GO:0046464">
    <property type="term" value="P:acylglycerol catabolic process"/>
    <property type="evidence" value="ECO:0000314"/>
    <property type="project" value="UniProtKB"/>
</dbReference>
<dbReference type="GO" id="GO:0051792">
    <property type="term" value="P:medium-chain fatty acid biosynthetic process"/>
    <property type="evidence" value="ECO:0000318"/>
    <property type="project" value="GO_Central"/>
</dbReference>
<dbReference type="GO" id="GO:0051793">
    <property type="term" value="P:medium-chain fatty acid catabolic process"/>
    <property type="evidence" value="ECO:0000318"/>
    <property type="project" value="GO_Central"/>
</dbReference>
<dbReference type="GO" id="GO:0014912">
    <property type="term" value="P:negative regulation of smooth muscle cell migration"/>
    <property type="evidence" value="ECO:0007669"/>
    <property type="project" value="Ensembl"/>
</dbReference>
<dbReference type="GO" id="GO:0032570">
    <property type="term" value="P:response to progesterone"/>
    <property type="evidence" value="ECO:0000314"/>
    <property type="project" value="UniProtKB"/>
</dbReference>
<dbReference type="GO" id="GO:0009611">
    <property type="term" value="P:response to wounding"/>
    <property type="evidence" value="ECO:0007669"/>
    <property type="project" value="Ensembl"/>
</dbReference>
<dbReference type="GO" id="GO:0014909">
    <property type="term" value="P:smooth muscle cell migration"/>
    <property type="evidence" value="ECO:0007669"/>
    <property type="project" value="Ensembl"/>
</dbReference>
<dbReference type="GO" id="GO:0048240">
    <property type="term" value="P:sperm capacitation"/>
    <property type="evidence" value="ECO:0000314"/>
    <property type="project" value="UniProtKB"/>
</dbReference>
<dbReference type="GO" id="GO:0043401">
    <property type="term" value="P:steroid hormone receptor signaling pathway"/>
    <property type="evidence" value="ECO:0000314"/>
    <property type="project" value="UniProtKB"/>
</dbReference>
<dbReference type="FunFam" id="3.40.50.1820:FF:000053">
    <property type="entry name" value="Abhydrolase domain containing 2"/>
    <property type="match status" value="1"/>
</dbReference>
<dbReference type="Gene3D" id="3.40.50.1820">
    <property type="entry name" value="alpha/beta hydrolase"/>
    <property type="match status" value="1"/>
</dbReference>
<dbReference type="InterPro" id="IPR000073">
    <property type="entry name" value="AB_hydrolase_1"/>
</dbReference>
<dbReference type="InterPro" id="IPR000952">
    <property type="entry name" value="AB_hydrolase_4_CS"/>
</dbReference>
<dbReference type="InterPro" id="IPR050960">
    <property type="entry name" value="AB_hydrolase_4_sf"/>
</dbReference>
<dbReference type="InterPro" id="IPR029058">
    <property type="entry name" value="AB_hydrolase_fold"/>
</dbReference>
<dbReference type="InterPro" id="IPR012020">
    <property type="entry name" value="ABHD4"/>
</dbReference>
<dbReference type="PANTHER" id="PTHR10794">
    <property type="entry name" value="ABHYDROLASE DOMAIN-CONTAINING PROTEIN"/>
    <property type="match status" value="1"/>
</dbReference>
<dbReference type="PANTHER" id="PTHR10794:SF45">
    <property type="entry name" value="MONOACYLGLYCEROL LIPASE ABHD2"/>
    <property type="match status" value="1"/>
</dbReference>
<dbReference type="Pfam" id="PF00561">
    <property type="entry name" value="Abhydrolase_1"/>
    <property type="match status" value="1"/>
</dbReference>
<dbReference type="PIRSF" id="PIRSF005211">
    <property type="entry name" value="Ab_hydro_YheT"/>
    <property type="match status" value="1"/>
</dbReference>
<dbReference type="SUPFAM" id="SSF53474">
    <property type="entry name" value="alpha/beta-Hydrolases"/>
    <property type="match status" value="1"/>
</dbReference>
<dbReference type="PROSITE" id="PS01133">
    <property type="entry name" value="UPF0017"/>
    <property type="match status" value="1"/>
</dbReference>
<comment type="function">
    <text evidence="2 6 7">Progesterone-dependent acylglycerol lipase that catalyzes hydrolysis of endocannabinoid arachidonoylglycerol (AG) from cell membrane (PubMed:26989199). Acts as a progesterone receptor: progesterone-binding activates the acylglycerol lipase activity, mediating degradation of 1-arachidonoylglycerol (1AG) and 2-arachidonoylglycerol (2AG) to glycerol and arachidonic acid (AA) (PubMed:26989199). Also displays an ester hydrolase activity against acetyl ester, butanoate ester and hexadecanoate ester (PubMed:27247428). Plays a key role in sperm capacitation in response to progesterone by mediating degradation of 2AG, an inhibitor of the sperm calcium channel CatSper, leading to calcium influx via CatSper and sperm activation (PubMed:26989199). May also play a role in smooth muscle cells migration (By similarity).</text>
</comment>
<comment type="catalytic activity">
    <reaction evidence="7">
        <text>an acetyl ester + H2O = an aliphatic alcohol + acetate + H(+)</text>
        <dbReference type="Rhea" id="RHEA:12957"/>
        <dbReference type="ChEBI" id="CHEBI:2571"/>
        <dbReference type="ChEBI" id="CHEBI:15377"/>
        <dbReference type="ChEBI" id="CHEBI:15378"/>
        <dbReference type="ChEBI" id="CHEBI:30089"/>
        <dbReference type="ChEBI" id="CHEBI:47622"/>
        <dbReference type="EC" id="3.1.1.6"/>
    </reaction>
    <physiologicalReaction direction="left-to-right" evidence="11">
        <dbReference type="Rhea" id="RHEA:12958"/>
    </physiologicalReaction>
</comment>
<comment type="catalytic activity">
    <reaction evidence="6">
        <text>Hydrolyzes glycerol monoesters of long-chain fatty acids.</text>
        <dbReference type="EC" id="3.1.1.23"/>
    </reaction>
</comment>
<comment type="catalytic activity">
    <reaction evidence="7">
        <text>a triacylglycerol + H2O = a diacylglycerol + a fatty acid + H(+)</text>
        <dbReference type="Rhea" id="RHEA:12044"/>
        <dbReference type="ChEBI" id="CHEBI:15377"/>
        <dbReference type="ChEBI" id="CHEBI:15378"/>
        <dbReference type="ChEBI" id="CHEBI:17855"/>
        <dbReference type="ChEBI" id="CHEBI:18035"/>
        <dbReference type="ChEBI" id="CHEBI:28868"/>
        <dbReference type="EC" id="3.1.1.79"/>
    </reaction>
    <physiologicalReaction direction="left-to-right" evidence="11">
        <dbReference type="Rhea" id="RHEA:12045"/>
    </physiologicalReaction>
</comment>
<comment type="catalytic activity">
    <reaction evidence="6">
        <text>2-(5Z,8Z,11Z,14Z-eicosatetraenoyl)-glycerol + H2O = glycerol + (5Z,8Z,11Z,14Z)-eicosatetraenoate + H(+)</text>
        <dbReference type="Rhea" id="RHEA:26132"/>
        <dbReference type="ChEBI" id="CHEBI:15377"/>
        <dbReference type="ChEBI" id="CHEBI:15378"/>
        <dbReference type="ChEBI" id="CHEBI:17754"/>
        <dbReference type="ChEBI" id="CHEBI:32395"/>
        <dbReference type="ChEBI" id="CHEBI:52392"/>
    </reaction>
    <physiologicalReaction direction="left-to-right" evidence="10">
        <dbReference type="Rhea" id="RHEA:26133"/>
    </physiologicalReaction>
</comment>
<comment type="catalytic activity">
    <reaction evidence="7">
        <text>a butanoate ester + H2O = an aliphatic alcohol + butanoate + H(+)</text>
        <dbReference type="Rhea" id="RHEA:47348"/>
        <dbReference type="ChEBI" id="CHEBI:2571"/>
        <dbReference type="ChEBI" id="CHEBI:15377"/>
        <dbReference type="ChEBI" id="CHEBI:15378"/>
        <dbReference type="ChEBI" id="CHEBI:17968"/>
        <dbReference type="ChEBI" id="CHEBI:50477"/>
    </reaction>
    <physiologicalReaction direction="left-to-right" evidence="11">
        <dbReference type="Rhea" id="RHEA:47349"/>
    </physiologicalReaction>
</comment>
<comment type="catalytic activity">
    <reaction evidence="7">
        <text>hexadecanoate ester + H2O = an aliphatic alcohol + hexadecanoate + H(+)</text>
        <dbReference type="Rhea" id="RHEA:47392"/>
        <dbReference type="ChEBI" id="CHEBI:2571"/>
        <dbReference type="ChEBI" id="CHEBI:7896"/>
        <dbReference type="ChEBI" id="CHEBI:15377"/>
        <dbReference type="ChEBI" id="CHEBI:15378"/>
        <dbReference type="ChEBI" id="CHEBI:25835"/>
    </reaction>
    <physiologicalReaction direction="left-to-right" evidence="11">
        <dbReference type="Rhea" id="RHEA:47393"/>
    </physiologicalReaction>
</comment>
<comment type="activity regulation">
    <text evidence="6">Acylglycerol lipase activity is activated upon binding to progesterone.</text>
</comment>
<comment type="biophysicochemical properties">
    <kinetics>
        <KM evidence="7">12.4 mM for p-nitrophenyl acetate</KM>
        <KM evidence="7">11.76 mM for p-nitrophenyl butyrate</KM>
        <KM evidence="7">17.66 mM for p-nitrophenyl palmitate</KM>
        <Vmax evidence="7">2.69 umol/sec/mg enzyme toward p-nitrophenyl acetate</Vmax>
        <Vmax evidence="7">3.71 umol/sec/mg enzyme toward p-nitrophenyl butyrate</Vmax>
        <Vmax evidence="7">1.27 umol/sec/mg enzyme toward p-nitrophenyl palmitate</Vmax>
    </kinetics>
    <phDependence>
        <text evidence="7">Optimum pH is 8.5 for p-nitrophenyl palmitate and 7.5 for p-nitrophenyl acetate and p-nitrophenyl butyrate.</text>
    </phDependence>
    <temperatureDependence>
        <text evidence="7">Optimum temperature is 45 degrees Celsius with p-nitrophenyl palmitate and 30 degrees Celsius with p-nitrophenyl acetate and p-nitrophenyl butyrate.</text>
    </temperatureDependence>
</comment>
<comment type="subcellular location">
    <subcellularLocation>
        <location evidence="10">Cell projection</location>
        <location evidence="10">Cilium</location>
        <location evidence="10">Flagellum membrane</location>
        <topology evidence="9">Single-pass type II membrane protein</topology>
    </subcellularLocation>
    <subcellularLocation>
        <location evidence="9">Cell membrane</location>
        <topology evidence="9">Single-pass type II membrane protein</topology>
    </subcellularLocation>
</comment>
<comment type="tissue specificity">
    <text evidence="6">Present in sperm (at protein level).</text>
</comment>
<comment type="similarity">
    <text evidence="9">Belongs to the AB hydrolase superfamily. AB hydrolase 4 family.</text>
</comment>
<comment type="caution">
    <text evidence="12">Was originally thought to be a G-coupled receptor.</text>
</comment>
<organism>
    <name type="scientific">Homo sapiens</name>
    <name type="common">Human</name>
    <dbReference type="NCBI Taxonomy" id="9606"/>
    <lineage>
        <taxon>Eukaryota</taxon>
        <taxon>Metazoa</taxon>
        <taxon>Chordata</taxon>
        <taxon>Craniata</taxon>
        <taxon>Vertebrata</taxon>
        <taxon>Euteleostomi</taxon>
        <taxon>Mammalia</taxon>
        <taxon>Eutheria</taxon>
        <taxon>Euarchontoglires</taxon>
        <taxon>Primates</taxon>
        <taxon>Haplorrhini</taxon>
        <taxon>Catarrhini</taxon>
        <taxon>Hominidae</taxon>
        <taxon>Homo</taxon>
    </lineage>
</organism>
<protein>
    <recommendedName>
        <fullName evidence="9">Monoacylglycerol lipase ABHD2</fullName>
        <ecNumber evidence="6">3.1.1.23</ecNumber>
    </recommendedName>
    <alternativeName>
        <fullName evidence="9">2-arachidonoylglycerol hydrolase</fullName>
    </alternativeName>
    <alternativeName>
        <fullName evidence="9">Abhydrolase domain-containing protein 2</fullName>
    </alternativeName>
    <alternativeName>
        <fullName evidence="9">Acetylesterase</fullName>
        <ecNumber evidence="7">3.1.1.6</ecNumber>
    </alternativeName>
    <alternativeName>
        <fullName evidence="2">Lung alpha/beta hydrolase 2</fullName>
    </alternativeName>
    <alternativeName>
        <fullName evidence="9">Progesterone-sensitive lipase</fullName>
        <ecNumber evidence="7">3.1.1.79</ecNumber>
    </alternativeName>
    <alternativeName>
        <fullName evidence="8">Protein PHPS1-2</fullName>
    </alternativeName>
</protein>
<feature type="chain" id="PRO_0000212457" description="Monoacylglycerol lipase ABHD2">
    <location>
        <begin position="1"/>
        <end position="425"/>
    </location>
</feature>
<feature type="topological domain" description="Cytoplasmic" evidence="9">
    <location>
        <begin position="1"/>
        <end position="9"/>
    </location>
</feature>
<feature type="transmembrane region" description="Helical; Signal-anchor for type II membrane protein" evidence="3">
    <location>
        <begin position="10"/>
        <end position="30"/>
    </location>
</feature>
<feature type="topological domain" description="Extracellular" evidence="9">
    <location>
        <begin position="31"/>
        <end position="425"/>
    </location>
</feature>
<feature type="domain" description="AB hydrolase-1" evidence="3">
    <location>
        <begin position="128"/>
        <end position="382"/>
    </location>
</feature>
<feature type="active site" description="Nucleophile" evidence="1">
    <location>
        <position position="207"/>
    </location>
</feature>
<feature type="active site" description="Charge relay system" evidence="1">
    <location>
        <position position="345"/>
    </location>
</feature>
<feature type="active site" description="Charge relay system" evidence="1">
    <location>
        <position position="376"/>
    </location>
</feature>
<feature type="glycosylation site" description="N-linked (GlcNAc...) asparagine" evidence="4">
    <location>
        <position position="136"/>
    </location>
</feature>
<feature type="sequence variant" id="VAR_031203" description="In dbSNP:rs17851730." evidence="5">
    <original>R</original>
    <variation>Q</variation>
    <location>
        <position position="253"/>
    </location>
</feature>
<feature type="sequence conflict" description="In Ref. 3; BAD96803." evidence="9" ref="3">
    <original>Y</original>
    <variation>C</variation>
    <location>
        <position position="27"/>
    </location>
</feature>
<feature type="sequence conflict" description="In Ref. 3; BAD96561." evidence="9" ref="3">
    <original>E</original>
    <variation>G</variation>
    <location>
        <position position="388"/>
    </location>
</feature>
<accession>P08910</accession>
<accession>Q53G48</accession>
<accession>Q53GU0</accession>
<accession>Q5FVD9</accession>
<accession>Q8TC79</accession>
<proteinExistence type="evidence at protein level"/>
<reference key="1">
    <citation type="journal article" date="1988" name="Nucleic Acids Res.">
        <title>Primary structure of a human protein which bears structural similarities to members of the rhodopsin/beta-adrenergic receptor family.</title>
        <authorList>
            <person name="Rapiejko P.J."/>
            <person name="George S.T."/>
            <person name="Malbon C.C."/>
        </authorList>
    </citation>
    <scope>NUCLEOTIDE SEQUENCE [MRNA]</scope>
    <source>
        <tissue>Placenta</tissue>
    </source>
</reference>
<reference key="2">
    <citation type="submission" date="2002-09" db="EMBL/GenBank/DDBJ databases">
        <title>Cloning of an androgen-regulated a/b hydrolase.</title>
        <authorList>
            <person name="Utleg A."/>
            <person name="White J."/>
            <person name="Lin B."/>
        </authorList>
    </citation>
    <scope>NUCLEOTIDE SEQUENCE [MRNA]</scope>
</reference>
<reference key="3">
    <citation type="submission" date="2005-04" db="EMBL/GenBank/DDBJ databases">
        <authorList>
            <person name="Suzuki Y."/>
            <person name="Sugano S."/>
            <person name="Totoki Y."/>
            <person name="Toyoda A."/>
            <person name="Takeda T."/>
            <person name="Sakaki Y."/>
            <person name="Tanaka A."/>
            <person name="Yokoyama S."/>
        </authorList>
    </citation>
    <scope>NUCLEOTIDE SEQUENCE [LARGE SCALE MRNA]</scope>
    <source>
        <tissue>Gastric carcinoma</tissue>
        <tissue>Liver</tissue>
    </source>
</reference>
<reference key="4">
    <citation type="journal article" date="2004" name="Genome Res.">
        <title>The status, quality, and expansion of the NIH full-length cDNA project: the Mammalian Gene Collection (MGC).</title>
        <authorList>
            <consortium name="The MGC Project Team"/>
        </authorList>
    </citation>
    <scope>NUCLEOTIDE SEQUENCE [LARGE SCALE MRNA]</scope>
    <scope>VARIANT GLN-253</scope>
    <source>
        <tissue>Testis</tissue>
    </source>
</reference>
<reference key="5">
    <citation type="journal article" date="2016" name="Biosci. Rep.">
        <title>Molecular characterization of human ABHD2 as TAG lipase and ester hydrolase.</title>
        <authorList>
            <person name="M N.K."/>
            <person name="V B S C T."/>
            <person name="G K V."/>
            <person name="B C.S."/>
            <person name="Guntupalli S."/>
            <person name="J S B."/>
        </authorList>
    </citation>
    <scope>CATALYTIC ACTIVITY</scope>
    <scope>BIOPHYSICOCHEMICAL PROPERTIES</scope>
    <scope>FUNCTION</scope>
</reference>
<reference key="6">
    <citation type="journal article" date="2016" name="Science">
        <title>Unconventional endocannabinoid signaling governs sperm activation via sex hormone progesterone.</title>
        <authorList>
            <person name="Miller M.R."/>
            <person name="Mannowetz N."/>
            <person name="Iavarone A.T."/>
            <person name="Safavi R."/>
            <person name="Gracheva E.O."/>
            <person name="Smith J.F."/>
            <person name="Hill R.Z."/>
            <person name="Bautista D.M."/>
            <person name="Kirichok Y."/>
            <person name="Lishko P.V."/>
        </authorList>
    </citation>
    <scope>FUNCTION</scope>
    <scope>CATALYTIC ACTIVITY</scope>
    <scope>ACTIVITY REGULATION</scope>
    <scope>SUBCELLULAR LOCATION</scope>
    <scope>TISSUE SPECIFICITY</scope>
    <scope>IDENTIFICATION BY MASS SPECTROMETRY</scope>
</reference>
<evidence type="ECO:0000250" key="1">
    <source>
        <dbReference type="UniProtKB" id="Q86WA6"/>
    </source>
</evidence>
<evidence type="ECO:0000250" key="2">
    <source>
        <dbReference type="UniProtKB" id="Q9QXM0"/>
    </source>
</evidence>
<evidence type="ECO:0000255" key="3"/>
<evidence type="ECO:0000255" key="4">
    <source>
        <dbReference type="PROSITE-ProRule" id="PRU00498"/>
    </source>
</evidence>
<evidence type="ECO:0000269" key="5">
    <source>
    </source>
</evidence>
<evidence type="ECO:0000269" key="6">
    <source>
    </source>
</evidence>
<evidence type="ECO:0000269" key="7">
    <source>
    </source>
</evidence>
<evidence type="ECO:0000303" key="8">
    <source>
    </source>
</evidence>
<evidence type="ECO:0000305" key="9"/>
<evidence type="ECO:0000305" key="10">
    <source>
    </source>
</evidence>
<evidence type="ECO:0000305" key="11">
    <source>
    </source>
</evidence>
<evidence type="ECO:0000305" key="12">
    <source>
    </source>
</evidence>
<evidence type="ECO:0000312" key="13">
    <source>
        <dbReference type="HGNC" id="HGNC:18717"/>
    </source>
</evidence>
<keyword id="KW-1003">Cell membrane</keyword>
<keyword id="KW-0966">Cell projection</keyword>
<keyword id="KW-0969">Cilium</keyword>
<keyword id="KW-0282">Flagellum</keyword>
<keyword id="KW-0325">Glycoprotein</keyword>
<keyword id="KW-0378">Hydrolase</keyword>
<keyword id="KW-0442">Lipid degradation</keyword>
<keyword id="KW-0443">Lipid metabolism</keyword>
<keyword id="KW-0472">Membrane</keyword>
<keyword id="KW-1267">Proteomics identification</keyword>
<keyword id="KW-1185">Reference proteome</keyword>
<keyword id="KW-0719">Serine esterase</keyword>
<keyword id="KW-0735">Signal-anchor</keyword>
<keyword id="KW-0812">Transmembrane</keyword>
<keyword id="KW-1133">Transmembrane helix</keyword>